<name>SSRP_BRUC2</name>
<reference key="1">
    <citation type="submission" date="2007-10" db="EMBL/GenBank/DDBJ databases">
        <title>Brucella canis ATCC 23365 whole genome shotgun sequencing project.</title>
        <authorList>
            <person name="Setubal J.C."/>
            <person name="Bowns C."/>
            <person name="Boyle S."/>
            <person name="Crasta O.R."/>
            <person name="Czar M.J."/>
            <person name="Dharmanolla C."/>
            <person name="Gillespie J.J."/>
            <person name="Kenyon R.W."/>
            <person name="Lu J."/>
            <person name="Mane S."/>
            <person name="Mohapatra S."/>
            <person name="Nagrani S."/>
            <person name="Purkayastha A."/>
            <person name="Rajasimha H.K."/>
            <person name="Shallom J.M."/>
            <person name="Shallom S."/>
            <person name="Shukla M."/>
            <person name="Snyder E.E."/>
            <person name="Sobral B.W."/>
            <person name="Wattam A.R."/>
            <person name="Will R."/>
            <person name="Williams K."/>
            <person name="Yoo H."/>
            <person name="Bruce D."/>
            <person name="Detter C."/>
            <person name="Munk C."/>
            <person name="Brettin T.S."/>
        </authorList>
    </citation>
    <scope>NUCLEOTIDE SEQUENCE [LARGE SCALE GENOMIC DNA]</scope>
    <source>
        <strain>ATCC 23365 / NCTC 10854 / RM-666</strain>
    </source>
</reference>
<accession>A9MA22</accession>
<sequence>MNKPKNSPARKMIAENRKARFNFEILDTLEAGLVLTGTEVKSLRANQANIAESYASFEDGEFWLINSYIPEYTQGNRFNHEPRRLRKLLVSRREMSRLFNSVSREGMTVVPLKLYFNDRGRAKLELALARGKKTHDKRETEKKRDWNREKARLLRDRG</sequence>
<evidence type="ECO:0000255" key="1">
    <source>
        <dbReference type="HAMAP-Rule" id="MF_00023"/>
    </source>
</evidence>
<evidence type="ECO:0000256" key="2">
    <source>
        <dbReference type="SAM" id="MobiDB-lite"/>
    </source>
</evidence>
<comment type="function">
    <text evidence="1">Required for rescue of stalled ribosomes mediated by trans-translation. Binds to transfer-messenger RNA (tmRNA), required for stable association of tmRNA with ribosomes. tmRNA and SmpB together mimic tRNA shape, replacing the anticodon stem-loop with SmpB. tmRNA is encoded by the ssrA gene; the 2 termini fold to resemble tRNA(Ala) and it encodes a 'tag peptide', a short internal open reading frame. During trans-translation Ala-aminoacylated tmRNA acts like a tRNA, entering the A-site of stalled ribosomes, displacing the stalled mRNA. The ribosome then switches to translate the ORF on the tmRNA; the nascent peptide is terminated with the 'tag peptide' encoded by the tmRNA and targeted for degradation. The ribosome is freed to recommence translation, which seems to be the essential function of trans-translation.</text>
</comment>
<comment type="subcellular location">
    <subcellularLocation>
        <location evidence="1">Cytoplasm</location>
    </subcellularLocation>
    <text evidence="1">The tmRNA-SmpB complex associates with stalled 70S ribosomes.</text>
</comment>
<comment type="similarity">
    <text evidence="1">Belongs to the SmpB family.</text>
</comment>
<gene>
    <name evidence="1" type="primary">smpB</name>
    <name type="ordered locus">BCAN_A0660</name>
</gene>
<organism>
    <name type="scientific">Brucella canis (strain ATCC 23365 / NCTC 10854 / RM-666)</name>
    <dbReference type="NCBI Taxonomy" id="483179"/>
    <lineage>
        <taxon>Bacteria</taxon>
        <taxon>Pseudomonadati</taxon>
        <taxon>Pseudomonadota</taxon>
        <taxon>Alphaproteobacteria</taxon>
        <taxon>Hyphomicrobiales</taxon>
        <taxon>Brucellaceae</taxon>
        <taxon>Brucella/Ochrobactrum group</taxon>
        <taxon>Brucella</taxon>
    </lineage>
</organism>
<keyword id="KW-0963">Cytoplasm</keyword>
<keyword id="KW-1185">Reference proteome</keyword>
<keyword id="KW-0694">RNA-binding</keyword>
<proteinExistence type="inferred from homology"/>
<dbReference type="EMBL" id="CP000872">
    <property type="protein sequence ID" value="ABX61734.1"/>
    <property type="molecule type" value="Genomic_DNA"/>
</dbReference>
<dbReference type="RefSeq" id="WP_002963791.1">
    <property type="nucleotide sequence ID" value="NC_010103.1"/>
</dbReference>
<dbReference type="SMR" id="A9MA22"/>
<dbReference type="GeneID" id="97534023"/>
<dbReference type="KEGG" id="bcs:BCAN_A0660"/>
<dbReference type="HOGENOM" id="CLU_108953_0_1_5"/>
<dbReference type="PhylomeDB" id="A9MA22"/>
<dbReference type="Proteomes" id="UP000001385">
    <property type="component" value="Chromosome I"/>
</dbReference>
<dbReference type="GO" id="GO:0005829">
    <property type="term" value="C:cytosol"/>
    <property type="evidence" value="ECO:0007669"/>
    <property type="project" value="TreeGrafter"/>
</dbReference>
<dbReference type="GO" id="GO:0003723">
    <property type="term" value="F:RNA binding"/>
    <property type="evidence" value="ECO:0007669"/>
    <property type="project" value="UniProtKB-UniRule"/>
</dbReference>
<dbReference type="GO" id="GO:0070929">
    <property type="term" value="P:trans-translation"/>
    <property type="evidence" value="ECO:0007669"/>
    <property type="project" value="UniProtKB-UniRule"/>
</dbReference>
<dbReference type="CDD" id="cd09294">
    <property type="entry name" value="SmpB"/>
    <property type="match status" value="1"/>
</dbReference>
<dbReference type="Gene3D" id="2.40.280.10">
    <property type="match status" value="1"/>
</dbReference>
<dbReference type="HAMAP" id="MF_00023">
    <property type="entry name" value="SmpB"/>
    <property type="match status" value="1"/>
</dbReference>
<dbReference type="InterPro" id="IPR023620">
    <property type="entry name" value="SmpB"/>
</dbReference>
<dbReference type="InterPro" id="IPR000037">
    <property type="entry name" value="SsrA-bd_prot"/>
</dbReference>
<dbReference type="InterPro" id="IPR020081">
    <property type="entry name" value="SsrA-bd_prot_CS"/>
</dbReference>
<dbReference type="NCBIfam" id="NF003843">
    <property type="entry name" value="PRK05422.1"/>
    <property type="match status" value="1"/>
</dbReference>
<dbReference type="NCBIfam" id="TIGR00086">
    <property type="entry name" value="smpB"/>
    <property type="match status" value="1"/>
</dbReference>
<dbReference type="PANTHER" id="PTHR30308:SF2">
    <property type="entry name" value="SSRA-BINDING PROTEIN"/>
    <property type="match status" value="1"/>
</dbReference>
<dbReference type="PANTHER" id="PTHR30308">
    <property type="entry name" value="TMRNA-BINDING COMPONENT OF TRANS-TRANSLATION TAGGING COMPLEX"/>
    <property type="match status" value="1"/>
</dbReference>
<dbReference type="Pfam" id="PF01668">
    <property type="entry name" value="SmpB"/>
    <property type="match status" value="1"/>
</dbReference>
<dbReference type="SUPFAM" id="SSF74982">
    <property type="entry name" value="Small protein B (SmpB)"/>
    <property type="match status" value="1"/>
</dbReference>
<dbReference type="PROSITE" id="PS01317">
    <property type="entry name" value="SSRP"/>
    <property type="match status" value="1"/>
</dbReference>
<protein>
    <recommendedName>
        <fullName evidence="1">SsrA-binding protein</fullName>
    </recommendedName>
    <alternativeName>
        <fullName evidence="1">Small protein B</fullName>
    </alternativeName>
</protein>
<feature type="chain" id="PRO_1000074343" description="SsrA-binding protein">
    <location>
        <begin position="1"/>
        <end position="158"/>
    </location>
</feature>
<feature type="region of interest" description="Disordered" evidence="2">
    <location>
        <begin position="131"/>
        <end position="158"/>
    </location>
</feature>
<feature type="compositionally biased region" description="Basic and acidic residues" evidence="2">
    <location>
        <begin position="136"/>
        <end position="158"/>
    </location>
</feature>